<keyword id="KW-0963">Cytoplasm</keyword>
<keyword id="KW-0648">Protein biosynthesis</keyword>
<proteinExistence type="inferred from homology"/>
<evidence type="ECO:0000255" key="1">
    <source>
        <dbReference type="HAMAP-Rule" id="MF_00040"/>
    </source>
</evidence>
<sequence length="185" mass="20684">MIENIKKDAQERMGKCVDATKNQMAKVRTGRAHPSLLDSIQVSYYGTMTPLNQVANVGVEDSRTLSVTVFDRSAIQAVEKAIMSSDLGLNPMSAGATLRIPLPALTEERRKDFIKVVRNEAENGRIAIRNVRRDAISEVKKLEKAKACTEDDVRRSEEEVQKFTDAHIKKVDEILAAKEIELMEV</sequence>
<dbReference type="EMBL" id="CP000753">
    <property type="protein sequence ID" value="ABS07598.1"/>
    <property type="molecule type" value="Genomic_DNA"/>
</dbReference>
<dbReference type="RefSeq" id="WP_012088724.1">
    <property type="nucleotide sequence ID" value="NC_009665.1"/>
</dbReference>
<dbReference type="SMR" id="A6WLA9"/>
<dbReference type="GeneID" id="11771733"/>
<dbReference type="KEGG" id="sbm:Shew185_1448"/>
<dbReference type="HOGENOM" id="CLU_073981_2_1_6"/>
<dbReference type="GO" id="GO:0005829">
    <property type="term" value="C:cytosol"/>
    <property type="evidence" value="ECO:0007669"/>
    <property type="project" value="GOC"/>
</dbReference>
<dbReference type="GO" id="GO:0043023">
    <property type="term" value="F:ribosomal large subunit binding"/>
    <property type="evidence" value="ECO:0007669"/>
    <property type="project" value="TreeGrafter"/>
</dbReference>
<dbReference type="GO" id="GO:0002184">
    <property type="term" value="P:cytoplasmic translational termination"/>
    <property type="evidence" value="ECO:0007669"/>
    <property type="project" value="TreeGrafter"/>
</dbReference>
<dbReference type="CDD" id="cd00520">
    <property type="entry name" value="RRF"/>
    <property type="match status" value="1"/>
</dbReference>
<dbReference type="FunFam" id="1.10.132.20:FF:000001">
    <property type="entry name" value="Ribosome-recycling factor"/>
    <property type="match status" value="1"/>
</dbReference>
<dbReference type="FunFam" id="3.30.1360.40:FF:000001">
    <property type="entry name" value="Ribosome-recycling factor"/>
    <property type="match status" value="1"/>
</dbReference>
<dbReference type="Gene3D" id="3.30.1360.40">
    <property type="match status" value="1"/>
</dbReference>
<dbReference type="Gene3D" id="1.10.132.20">
    <property type="entry name" value="Ribosome-recycling factor"/>
    <property type="match status" value="1"/>
</dbReference>
<dbReference type="HAMAP" id="MF_00040">
    <property type="entry name" value="RRF"/>
    <property type="match status" value="1"/>
</dbReference>
<dbReference type="InterPro" id="IPR002661">
    <property type="entry name" value="Ribosome_recyc_fac"/>
</dbReference>
<dbReference type="InterPro" id="IPR023584">
    <property type="entry name" value="Ribosome_recyc_fac_dom"/>
</dbReference>
<dbReference type="InterPro" id="IPR036191">
    <property type="entry name" value="RRF_sf"/>
</dbReference>
<dbReference type="NCBIfam" id="TIGR00496">
    <property type="entry name" value="frr"/>
    <property type="match status" value="1"/>
</dbReference>
<dbReference type="PANTHER" id="PTHR20982:SF3">
    <property type="entry name" value="MITOCHONDRIAL RIBOSOME RECYCLING FACTOR PSEUDO 1"/>
    <property type="match status" value="1"/>
</dbReference>
<dbReference type="PANTHER" id="PTHR20982">
    <property type="entry name" value="RIBOSOME RECYCLING FACTOR"/>
    <property type="match status" value="1"/>
</dbReference>
<dbReference type="Pfam" id="PF01765">
    <property type="entry name" value="RRF"/>
    <property type="match status" value="1"/>
</dbReference>
<dbReference type="SUPFAM" id="SSF55194">
    <property type="entry name" value="Ribosome recycling factor, RRF"/>
    <property type="match status" value="1"/>
</dbReference>
<reference key="1">
    <citation type="submission" date="2007-07" db="EMBL/GenBank/DDBJ databases">
        <title>Complete sequence of chromosome of Shewanella baltica OS185.</title>
        <authorList>
            <consortium name="US DOE Joint Genome Institute"/>
            <person name="Copeland A."/>
            <person name="Lucas S."/>
            <person name="Lapidus A."/>
            <person name="Barry K."/>
            <person name="Glavina del Rio T."/>
            <person name="Dalin E."/>
            <person name="Tice H."/>
            <person name="Pitluck S."/>
            <person name="Sims D."/>
            <person name="Brettin T."/>
            <person name="Bruce D."/>
            <person name="Detter J.C."/>
            <person name="Han C."/>
            <person name="Schmutz J."/>
            <person name="Larimer F."/>
            <person name="Land M."/>
            <person name="Hauser L."/>
            <person name="Kyrpides N."/>
            <person name="Mikhailova N."/>
            <person name="Brettar I."/>
            <person name="Rodrigues J."/>
            <person name="Konstantinidis K."/>
            <person name="Tiedje J."/>
            <person name="Richardson P."/>
        </authorList>
    </citation>
    <scope>NUCLEOTIDE SEQUENCE [LARGE SCALE GENOMIC DNA]</scope>
    <source>
        <strain>OS185</strain>
    </source>
</reference>
<accession>A6WLA9</accession>
<gene>
    <name evidence="1" type="primary">frr</name>
    <name type="ordered locus">Shew185_1448</name>
</gene>
<comment type="function">
    <text evidence="1">Responsible for the release of ribosomes from messenger RNA at the termination of protein biosynthesis. May increase the efficiency of translation by recycling ribosomes from one round of translation to another.</text>
</comment>
<comment type="subcellular location">
    <subcellularLocation>
        <location evidence="1">Cytoplasm</location>
    </subcellularLocation>
</comment>
<comment type="similarity">
    <text evidence="1">Belongs to the RRF family.</text>
</comment>
<feature type="chain" id="PRO_1000003257" description="Ribosome-recycling factor">
    <location>
        <begin position="1"/>
        <end position="185"/>
    </location>
</feature>
<name>RRF_SHEB8</name>
<organism>
    <name type="scientific">Shewanella baltica (strain OS185)</name>
    <dbReference type="NCBI Taxonomy" id="402882"/>
    <lineage>
        <taxon>Bacteria</taxon>
        <taxon>Pseudomonadati</taxon>
        <taxon>Pseudomonadota</taxon>
        <taxon>Gammaproteobacteria</taxon>
        <taxon>Alteromonadales</taxon>
        <taxon>Shewanellaceae</taxon>
        <taxon>Shewanella</taxon>
    </lineage>
</organism>
<protein>
    <recommendedName>
        <fullName evidence="1">Ribosome-recycling factor</fullName>
        <shortName evidence="1">RRF</shortName>
    </recommendedName>
    <alternativeName>
        <fullName evidence="1">Ribosome-releasing factor</fullName>
    </alternativeName>
</protein>